<accession>Q3AS37</accession>
<feature type="chain" id="PRO_1000023173" description="Thymidylate kinase">
    <location>
        <begin position="1"/>
        <end position="222"/>
    </location>
</feature>
<feature type="binding site" evidence="1">
    <location>
        <begin position="7"/>
        <end position="14"/>
    </location>
    <ligand>
        <name>ATP</name>
        <dbReference type="ChEBI" id="CHEBI:30616"/>
    </ligand>
</feature>
<sequence>MLITFEGIDGAGKSTQVAKLVAYLKQQSTPLLSLREPGGTPTAESIRSLLLDNRKSITPIAELLLFSASRAELVETLIRPALAEGKTVILDRFFDSTTAYQGHGRGISLEQLHSIIALSTGDLLPDVTFYLDLEPEEALRRAFSRSGLPLDFAAQSNESDRMEQAGIAFYHKVRNGYLTLMQQHPSRFVALDATQPPDTLHQHIIAEVETRLKLHISPLVAP</sequence>
<gene>
    <name evidence="1" type="primary">tmk</name>
    <name type="ordered locus">Cag_0925</name>
</gene>
<comment type="function">
    <text evidence="1">Phosphorylation of dTMP to form dTDP in both de novo and salvage pathways of dTTP synthesis.</text>
</comment>
<comment type="catalytic activity">
    <reaction evidence="1">
        <text>dTMP + ATP = dTDP + ADP</text>
        <dbReference type="Rhea" id="RHEA:13517"/>
        <dbReference type="ChEBI" id="CHEBI:30616"/>
        <dbReference type="ChEBI" id="CHEBI:58369"/>
        <dbReference type="ChEBI" id="CHEBI:63528"/>
        <dbReference type="ChEBI" id="CHEBI:456216"/>
        <dbReference type="EC" id="2.7.4.9"/>
    </reaction>
</comment>
<comment type="similarity">
    <text evidence="1">Belongs to the thymidylate kinase family.</text>
</comment>
<organism>
    <name type="scientific">Chlorobium chlorochromatii (strain CaD3)</name>
    <dbReference type="NCBI Taxonomy" id="340177"/>
    <lineage>
        <taxon>Bacteria</taxon>
        <taxon>Pseudomonadati</taxon>
        <taxon>Chlorobiota</taxon>
        <taxon>Chlorobiia</taxon>
        <taxon>Chlorobiales</taxon>
        <taxon>Chlorobiaceae</taxon>
        <taxon>Chlorobium/Pelodictyon group</taxon>
        <taxon>Chlorobium</taxon>
    </lineage>
</organism>
<proteinExistence type="inferred from homology"/>
<dbReference type="EC" id="2.7.4.9" evidence="1"/>
<dbReference type="EMBL" id="CP000108">
    <property type="protein sequence ID" value="ABB28188.1"/>
    <property type="molecule type" value="Genomic_DNA"/>
</dbReference>
<dbReference type="SMR" id="Q3AS37"/>
<dbReference type="STRING" id="340177.Cag_0925"/>
<dbReference type="KEGG" id="cch:Cag_0925"/>
<dbReference type="eggNOG" id="COG0125">
    <property type="taxonomic scope" value="Bacteria"/>
</dbReference>
<dbReference type="HOGENOM" id="CLU_049131_0_2_10"/>
<dbReference type="OrthoDB" id="9774907at2"/>
<dbReference type="GO" id="GO:0005829">
    <property type="term" value="C:cytosol"/>
    <property type="evidence" value="ECO:0007669"/>
    <property type="project" value="TreeGrafter"/>
</dbReference>
<dbReference type="GO" id="GO:0005524">
    <property type="term" value="F:ATP binding"/>
    <property type="evidence" value="ECO:0007669"/>
    <property type="project" value="UniProtKB-UniRule"/>
</dbReference>
<dbReference type="GO" id="GO:0004798">
    <property type="term" value="F:dTMP kinase activity"/>
    <property type="evidence" value="ECO:0007669"/>
    <property type="project" value="UniProtKB-UniRule"/>
</dbReference>
<dbReference type="GO" id="GO:0006233">
    <property type="term" value="P:dTDP biosynthetic process"/>
    <property type="evidence" value="ECO:0007669"/>
    <property type="project" value="InterPro"/>
</dbReference>
<dbReference type="GO" id="GO:0006235">
    <property type="term" value="P:dTTP biosynthetic process"/>
    <property type="evidence" value="ECO:0007669"/>
    <property type="project" value="UniProtKB-UniRule"/>
</dbReference>
<dbReference type="GO" id="GO:0006227">
    <property type="term" value="P:dUDP biosynthetic process"/>
    <property type="evidence" value="ECO:0007669"/>
    <property type="project" value="TreeGrafter"/>
</dbReference>
<dbReference type="CDD" id="cd01672">
    <property type="entry name" value="TMPK"/>
    <property type="match status" value="1"/>
</dbReference>
<dbReference type="FunFam" id="3.40.50.300:FF:000225">
    <property type="entry name" value="Thymidylate kinase"/>
    <property type="match status" value="1"/>
</dbReference>
<dbReference type="Gene3D" id="3.40.50.300">
    <property type="entry name" value="P-loop containing nucleotide triphosphate hydrolases"/>
    <property type="match status" value="1"/>
</dbReference>
<dbReference type="HAMAP" id="MF_00165">
    <property type="entry name" value="Thymidylate_kinase"/>
    <property type="match status" value="1"/>
</dbReference>
<dbReference type="InterPro" id="IPR027417">
    <property type="entry name" value="P-loop_NTPase"/>
</dbReference>
<dbReference type="InterPro" id="IPR039430">
    <property type="entry name" value="Thymidylate_kin-like_dom"/>
</dbReference>
<dbReference type="InterPro" id="IPR018095">
    <property type="entry name" value="Thymidylate_kin_CS"/>
</dbReference>
<dbReference type="InterPro" id="IPR018094">
    <property type="entry name" value="Thymidylate_kinase"/>
</dbReference>
<dbReference type="NCBIfam" id="TIGR00041">
    <property type="entry name" value="DTMP_kinase"/>
    <property type="match status" value="1"/>
</dbReference>
<dbReference type="PANTHER" id="PTHR10344">
    <property type="entry name" value="THYMIDYLATE KINASE"/>
    <property type="match status" value="1"/>
</dbReference>
<dbReference type="PANTHER" id="PTHR10344:SF4">
    <property type="entry name" value="UMP-CMP KINASE 2, MITOCHONDRIAL"/>
    <property type="match status" value="1"/>
</dbReference>
<dbReference type="Pfam" id="PF02223">
    <property type="entry name" value="Thymidylate_kin"/>
    <property type="match status" value="1"/>
</dbReference>
<dbReference type="SUPFAM" id="SSF52540">
    <property type="entry name" value="P-loop containing nucleoside triphosphate hydrolases"/>
    <property type="match status" value="1"/>
</dbReference>
<dbReference type="PROSITE" id="PS01331">
    <property type="entry name" value="THYMIDYLATE_KINASE"/>
    <property type="match status" value="1"/>
</dbReference>
<evidence type="ECO:0000255" key="1">
    <source>
        <dbReference type="HAMAP-Rule" id="MF_00165"/>
    </source>
</evidence>
<name>KTHY_CHLCH</name>
<reference key="1">
    <citation type="submission" date="2005-08" db="EMBL/GenBank/DDBJ databases">
        <title>Complete sequence of Chlorobium chlorochromatii CaD3.</title>
        <authorList>
            <consortium name="US DOE Joint Genome Institute"/>
            <person name="Copeland A."/>
            <person name="Lucas S."/>
            <person name="Lapidus A."/>
            <person name="Barry K."/>
            <person name="Detter J.C."/>
            <person name="Glavina T."/>
            <person name="Hammon N."/>
            <person name="Israni S."/>
            <person name="Pitluck S."/>
            <person name="Bryant D."/>
            <person name="Schmutz J."/>
            <person name="Larimer F."/>
            <person name="Land M."/>
            <person name="Kyrpides N."/>
            <person name="Ivanova N."/>
            <person name="Richardson P."/>
        </authorList>
    </citation>
    <scope>NUCLEOTIDE SEQUENCE [LARGE SCALE GENOMIC DNA]</scope>
    <source>
        <strain>CaD3</strain>
    </source>
</reference>
<protein>
    <recommendedName>
        <fullName evidence="1">Thymidylate kinase</fullName>
        <ecNumber evidence="1">2.7.4.9</ecNumber>
    </recommendedName>
    <alternativeName>
        <fullName evidence="1">dTMP kinase</fullName>
    </alternativeName>
</protein>
<keyword id="KW-0067">ATP-binding</keyword>
<keyword id="KW-0418">Kinase</keyword>
<keyword id="KW-0545">Nucleotide biosynthesis</keyword>
<keyword id="KW-0547">Nucleotide-binding</keyword>
<keyword id="KW-0808">Transferase</keyword>